<reference key="1">
    <citation type="journal article" date="2004" name="PLoS Biol.">
        <title>Genomic insights into methanotrophy: the complete genome sequence of Methylococcus capsulatus (Bath).</title>
        <authorList>
            <person name="Ward N.L."/>
            <person name="Larsen O."/>
            <person name="Sakwa J."/>
            <person name="Bruseth L."/>
            <person name="Khouri H.M."/>
            <person name="Durkin A.S."/>
            <person name="Dimitrov G."/>
            <person name="Jiang L."/>
            <person name="Scanlan D."/>
            <person name="Kang K.H."/>
            <person name="Lewis M.R."/>
            <person name="Nelson K.E."/>
            <person name="Methe B.A."/>
            <person name="Wu M."/>
            <person name="Heidelberg J.F."/>
            <person name="Paulsen I.T."/>
            <person name="Fouts D.E."/>
            <person name="Ravel J."/>
            <person name="Tettelin H."/>
            <person name="Ren Q."/>
            <person name="Read T.D."/>
            <person name="DeBoy R.T."/>
            <person name="Seshadri R."/>
            <person name="Salzberg S.L."/>
            <person name="Jensen H.B."/>
            <person name="Birkeland N.K."/>
            <person name="Nelson W.C."/>
            <person name="Dodson R.J."/>
            <person name="Grindhaug S.H."/>
            <person name="Holt I.E."/>
            <person name="Eidhammer I."/>
            <person name="Jonasen I."/>
            <person name="Vanaken S."/>
            <person name="Utterback T.R."/>
            <person name="Feldblyum T.V."/>
            <person name="Fraser C.M."/>
            <person name="Lillehaug J.R."/>
            <person name="Eisen J.A."/>
        </authorList>
    </citation>
    <scope>NUCLEOTIDE SEQUENCE [LARGE SCALE GENOMIC DNA]</scope>
    <source>
        <strain>ATCC 33009 / NCIMB 11132 / Bath</strain>
    </source>
</reference>
<protein>
    <recommendedName>
        <fullName evidence="1">2-isopropylmalate synthase</fullName>
        <ecNumber evidence="1">2.3.3.13</ecNumber>
    </recommendedName>
    <alternativeName>
        <fullName evidence="1">Alpha-IPM synthase</fullName>
    </alternativeName>
    <alternativeName>
        <fullName evidence="1">Alpha-isopropylmalate synthase</fullName>
    </alternativeName>
</protein>
<accession>Q605K7</accession>
<feature type="chain" id="PRO_1000149219" description="2-isopropylmalate synthase">
    <location>
        <begin position="1"/>
        <end position="514"/>
    </location>
</feature>
<feature type="domain" description="Pyruvate carboxyltransferase" evidence="1">
    <location>
        <begin position="5"/>
        <end position="267"/>
    </location>
</feature>
<feature type="region of interest" description="Regulatory domain" evidence="1">
    <location>
        <begin position="393"/>
        <end position="514"/>
    </location>
</feature>
<feature type="binding site" evidence="1">
    <location>
        <position position="14"/>
    </location>
    <ligand>
        <name>Mn(2+)</name>
        <dbReference type="ChEBI" id="CHEBI:29035"/>
    </ligand>
</feature>
<feature type="binding site" evidence="1">
    <location>
        <position position="202"/>
    </location>
    <ligand>
        <name>Mn(2+)</name>
        <dbReference type="ChEBI" id="CHEBI:29035"/>
    </ligand>
</feature>
<feature type="binding site" evidence="1">
    <location>
        <position position="204"/>
    </location>
    <ligand>
        <name>Mn(2+)</name>
        <dbReference type="ChEBI" id="CHEBI:29035"/>
    </ligand>
</feature>
<feature type="binding site" evidence="1">
    <location>
        <position position="238"/>
    </location>
    <ligand>
        <name>Mn(2+)</name>
        <dbReference type="ChEBI" id="CHEBI:29035"/>
    </ligand>
</feature>
<name>LEU1_METCA</name>
<gene>
    <name evidence="1" type="primary">leuA</name>
    <name type="ordered locus">MCA2275</name>
</gene>
<sequence>MHDRLIIFDTTLRDGEQSPGASMTRDEKVRIARALERLKVDVIEAGFPAASPGDFEAVQAVARTIKDSRVCGLARALDRDIDRAGEALKDAQRARIHTFIATSPIHMRHKLQMSPDQVVEYAVKAVKRARQYTDDVEFSPEDAGRSEEDFLCRILEAVIDAGATTLNIPDTVGYAFPEQFGHMIGRLIERIPNSDKAVFSVHCHNDLGLAVANSLAAVLHGARQVECTINGLGERAGNAALEEIVMAVRTRKDIFPCHTDIETREIVACSKLVSSITGFPIQPNKAIVGANAFAHESGIHQDGVLKSRETYEIMSAEDVGWSTNRMVLGKHSGRNAFRTRMQELGIEFASEEELNSVFQRFKVLADKKHEIFDEDLQALITEAGAEAEDERVKLVALRVCSETGEIPHAQVTIKVDNEERTGTSSGGGAVDASLKAIESLLHTDTALTLYSVNNITSGTDAQGEVTVRLEKGGRIVNGQGADTDIVIASAKAYVNAVNKLLAPIQRTHPQVGDV</sequence>
<keyword id="KW-0028">Amino-acid biosynthesis</keyword>
<keyword id="KW-0100">Branched-chain amino acid biosynthesis</keyword>
<keyword id="KW-0963">Cytoplasm</keyword>
<keyword id="KW-0432">Leucine biosynthesis</keyword>
<keyword id="KW-0464">Manganese</keyword>
<keyword id="KW-0479">Metal-binding</keyword>
<keyword id="KW-1185">Reference proteome</keyword>
<keyword id="KW-0808">Transferase</keyword>
<proteinExistence type="inferred from homology"/>
<evidence type="ECO:0000255" key="1">
    <source>
        <dbReference type="HAMAP-Rule" id="MF_01025"/>
    </source>
</evidence>
<dbReference type="EC" id="2.3.3.13" evidence="1"/>
<dbReference type="EMBL" id="AE017282">
    <property type="protein sequence ID" value="AAU91708.1"/>
    <property type="molecule type" value="Genomic_DNA"/>
</dbReference>
<dbReference type="RefSeq" id="WP_010961504.1">
    <property type="nucleotide sequence ID" value="NC_002977.6"/>
</dbReference>
<dbReference type="SMR" id="Q605K7"/>
<dbReference type="STRING" id="243233.MCA2275"/>
<dbReference type="GeneID" id="88224480"/>
<dbReference type="KEGG" id="mca:MCA2275"/>
<dbReference type="eggNOG" id="COG0119">
    <property type="taxonomic scope" value="Bacteria"/>
</dbReference>
<dbReference type="HOGENOM" id="CLU_022158_0_1_6"/>
<dbReference type="UniPathway" id="UPA00048">
    <property type="reaction ID" value="UER00070"/>
</dbReference>
<dbReference type="Proteomes" id="UP000006821">
    <property type="component" value="Chromosome"/>
</dbReference>
<dbReference type="GO" id="GO:0005829">
    <property type="term" value="C:cytosol"/>
    <property type="evidence" value="ECO:0007669"/>
    <property type="project" value="TreeGrafter"/>
</dbReference>
<dbReference type="GO" id="GO:0003852">
    <property type="term" value="F:2-isopropylmalate synthase activity"/>
    <property type="evidence" value="ECO:0007669"/>
    <property type="project" value="UniProtKB-UniRule"/>
</dbReference>
<dbReference type="GO" id="GO:0003985">
    <property type="term" value="F:acetyl-CoA C-acetyltransferase activity"/>
    <property type="evidence" value="ECO:0007669"/>
    <property type="project" value="UniProtKB-UniRule"/>
</dbReference>
<dbReference type="GO" id="GO:0030145">
    <property type="term" value="F:manganese ion binding"/>
    <property type="evidence" value="ECO:0007669"/>
    <property type="project" value="UniProtKB-UniRule"/>
</dbReference>
<dbReference type="GO" id="GO:0009098">
    <property type="term" value="P:L-leucine biosynthetic process"/>
    <property type="evidence" value="ECO:0007669"/>
    <property type="project" value="UniProtKB-UniRule"/>
</dbReference>
<dbReference type="CDD" id="cd07940">
    <property type="entry name" value="DRE_TIM_IPMS"/>
    <property type="match status" value="1"/>
</dbReference>
<dbReference type="FunFam" id="1.10.238.260:FF:000001">
    <property type="entry name" value="2-isopropylmalate synthase"/>
    <property type="match status" value="1"/>
</dbReference>
<dbReference type="FunFam" id="3.20.20.70:FF:000010">
    <property type="entry name" value="2-isopropylmalate synthase"/>
    <property type="match status" value="1"/>
</dbReference>
<dbReference type="FunFam" id="3.30.160.270:FF:000003">
    <property type="entry name" value="2-isopropylmalate synthase"/>
    <property type="match status" value="1"/>
</dbReference>
<dbReference type="Gene3D" id="1.10.238.260">
    <property type="match status" value="1"/>
</dbReference>
<dbReference type="Gene3D" id="3.30.160.270">
    <property type="match status" value="1"/>
</dbReference>
<dbReference type="Gene3D" id="3.20.20.70">
    <property type="entry name" value="Aldolase class I"/>
    <property type="match status" value="1"/>
</dbReference>
<dbReference type="HAMAP" id="MF_01025">
    <property type="entry name" value="LeuA_type1"/>
    <property type="match status" value="1"/>
</dbReference>
<dbReference type="InterPro" id="IPR050073">
    <property type="entry name" value="2-IPM_HCS-like"/>
</dbReference>
<dbReference type="InterPro" id="IPR013709">
    <property type="entry name" value="2-isopropylmalate_synth_dimer"/>
</dbReference>
<dbReference type="InterPro" id="IPR002034">
    <property type="entry name" value="AIPM/Hcit_synth_CS"/>
</dbReference>
<dbReference type="InterPro" id="IPR013785">
    <property type="entry name" value="Aldolase_TIM"/>
</dbReference>
<dbReference type="InterPro" id="IPR054691">
    <property type="entry name" value="LeuA/HCS_post-cat"/>
</dbReference>
<dbReference type="InterPro" id="IPR036230">
    <property type="entry name" value="LeuA_allosteric_dom_sf"/>
</dbReference>
<dbReference type="InterPro" id="IPR005671">
    <property type="entry name" value="LeuA_bact_synth"/>
</dbReference>
<dbReference type="InterPro" id="IPR000891">
    <property type="entry name" value="PYR_CT"/>
</dbReference>
<dbReference type="NCBIfam" id="TIGR00973">
    <property type="entry name" value="leuA_bact"/>
    <property type="match status" value="1"/>
</dbReference>
<dbReference type="NCBIfam" id="NF002086">
    <property type="entry name" value="PRK00915.1-3"/>
    <property type="match status" value="1"/>
</dbReference>
<dbReference type="NCBIfam" id="NF002087">
    <property type="entry name" value="PRK00915.1-4"/>
    <property type="match status" value="1"/>
</dbReference>
<dbReference type="PANTHER" id="PTHR10277:SF9">
    <property type="entry name" value="2-ISOPROPYLMALATE SYNTHASE 1, CHLOROPLASTIC-RELATED"/>
    <property type="match status" value="1"/>
</dbReference>
<dbReference type="PANTHER" id="PTHR10277">
    <property type="entry name" value="HOMOCITRATE SYNTHASE-RELATED"/>
    <property type="match status" value="1"/>
</dbReference>
<dbReference type="Pfam" id="PF22617">
    <property type="entry name" value="HCS_D2"/>
    <property type="match status" value="1"/>
</dbReference>
<dbReference type="Pfam" id="PF00682">
    <property type="entry name" value="HMGL-like"/>
    <property type="match status" value="1"/>
</dbReference>
<dbReference type="Pfam" id="PF08502">
    <property type="entry name" value="LeuA_dimer"/>
    <property type="match status" value="1"/>
</dbReference>
<dbReference type="SMART" id="SM00917">
    <property type="entry name" value="LeuA_dimer"/>
    <property type="match status" value="1"/>
</dbReference>
<dbReference type="SUPFAM" id="SSF110921">
    <property type="entry name" value="2-isopropylmalate synthase LeuA, allosteric (dimerisation) domain"/>
    <property type="match status" value="1"/>
</dbReference>
<dbReference type="SUPFAM" id="SSF51569">
    <property type="entry name" value="Aldolase"/>
    <property type="match status" value="1"/>
</dbReference>
<dbReference type="PROSITE" id="PS00815">
    <property type="entry name" value="AIPM_HOMOCIT_SYNTH_1"/>
    <property type="match status" value="1"/>
</dbReference>
<dbReference type="PROSITE" id="PS00816">
    <property type="entry name" value="AIPM_HOMOCIT_SYNTH_2"/>
    <property type="match status" value="1"/>
</dbReference>
<dbReference type="PROSITE" id="PS50991">
    <property type="entry name" value="PYR_CT"/>
    <property type="match status" value="1"/>
</dbReference>
<comment type="function">
    <text evidence="1">Catalyzes the condensation of the acetyl group of acetyl-CoA with 3-methyl-2-oxobutanoate (2-ketoisovalerate) to form 3-carboxy-3-hydroxy-4-methylpentanoate (2-isopropylmalate).</text>
</comment>
<comment type="catalytic activity">
    <reaction evidence="1">
        <text>3-methyl-2-oxobutanoate + acetyl-CoA + H2O = (2S)-2-isopropylmalate + CoA + H(+)</text>
        <dbReference type="Rhea" id="RHEA:21524"/>
        <dbReference type="ChEBI" id="CHEBI:1178"/>
        <dbReference type="ChEBI" id="CHEBI:11851"/>
        <dbReference type="ChEBI" id="CHEBI:15377"/>
        <dbReference type="ChEBI" id="CHEBI:15378"/>
        <dbReference type="ChEBI" id="CHEBI:57287"/>
        <dbReference type="ChEBI" id="CHEBI:57288"/>
        <dbReference type="EC" id="2.3.3.13"/>
    </reaction>
</comment>
<comment type="cofactor">
    <cofactor evidence="1">
        <name>Mn(2+)</name>
        <dbReference type="ChEBI" id="CHEBI:29035"/>
    </cofactor>
</comment>
<comment type="pathway">
    <text evidence="1">Amino-acid biosynthesis; L-leucine biosynthesis; L-leucine from 3-methyl-2-oxobutanoate: step 1/4.</text>
</comment>
<comment type="subunit">
    <text evidence="1">Homodimer.</text>
</comment>
<comment type="subcellular location">
    <subcellularLocation>
        <location evidence="1">Cytoplasm</location>
    </subcellularLocation>
</comment>
<comment type="similarity">
    <text evidence="1">Belongs to the alpha-IPM synthase/homocitrate synthase family. LeuA type 1 subfamily.</text>
</comment>
<organism>
    <name type="scientific">Methylococcus capsulatus (strain ATCC 33009 / NCIMB 11132 / Bath)</name>
    <dbReference type="NCBI Taxonomy" id="243233"/>
    <lineage>
        <taxon>Bacteria</taxon>
        <taxon>Pseudomonadati</taxon>
        <taxon>Pseudomonadota</taxon>
        <taxon>Gammaproteobacteria</taxon>
        <taxon>Methylococcales</taxon>
        <taxon>Methylococcaceae</taxon>
        <taxon>Methylococcus</taxon>
    </lineage>
</organism>